<protein>
    <recommendedName>
        <fullName evidence="6">Conotoxin tx3c</fullName>
    </recommendedName>
    <alternativeName>
        <fullName evidence="7">Textile scratcher peptide</fullName>
    </alternativeName>
    <alternativeName>
        <fullName evidence="6">Tx3.4</fullName>
    </alternativeName>
</protein>
<evidence type="ECO:0000255" key="1"/>
<evidence type="ECO:0000269" key="2">
    <source>
    </source>
</evidence>
<evidence type="ECO:0000269" key="3">
    <source>
    </source>
</evidence>
<evidence type="ECO:0000269" key="4">
    <source>
    </source>
</evidence>
<evidence type="ECO:0000269" key="5">
    <source ref="3"/>
</evidence>
<evidence type="ECO:0000303" key="6">
    <source>
    </source>
</evidence>
<evidence type="ECO:0000303" key="7">
    <source ref="3"/>
</evidence>
<evidence type="ECO:0000305" key="8"/>
<evidence type="ECO:0000305" key="9">
    <source>
    </source>
</evidence>
<evidence type="ECO:0000305" key="10">
    <source>
    </source>
</evidence>
<accession>P58846</accession>
<name>M3C_CONTE</name>
<feature type="signal peptide" evidence="1">
    <location>
        <begin position="1"/>
        <end position="19"/>
    </location>
</feature>
<feature type="propeptide" id="PRO_0000246006" evidence="8">
    <location>
        <begin position="20"/>
        <end position="50"/>
    </location>
</feature>
<feature type="peptide" id="PRO_0000044503" description="Conotoxin tx3c" evidence="3">
    <location>
        <begin position="53"/>
        <end position="64"/>
    </location>
</feature>
<feature type="modified residue" description="4-hydroxyproline; partial" evidence="2 3 4">
    <location>
        <position position="62"/>
    </location>
</feature>
<feature type="modified residue" description="Cysteine amide" evidence="2 3 4">
    <location>
        <position position="64"/>
    </location>
</feature>
<feature type="disulfide bond" evidence="2 3">
    <location>
        <begin position="53"/>
        <end position="64"/>
    </location>
</feature>
<feature type="disulfide bond" evidence="2 3">
    <location>
        <begin position="54"/>
        <end position="60"/>
    </location>
</feature>
<feature type="disulfide bond" evidence="2 3">
    <location>
        <begin position="57"/>
        <end position="63"/>
    </location>
</feature>
<sequence>MFKLGVLLTICLLLFSLNAVPLDGDQPADQPAERLLDDISFENNPFYDPAKRCCRTCFGCTPCCG</sequence>
<organism>
    <name type="scientific">Conus textile</name>
    <name type="common">Cloth-of-gold cone</name>
    <dbReference type="NCBI Taxonomy" id="6494"/>
    <lineage>
        <taxon>Eukaryota</taxon>
        <taxon>Metazoa</taxon>
        <taxon>Spiralia</taxon>
        <taxon>Lophotrochozoa</taxon>
        <taxon>Mollusca</taxon>
        <taxon>Gastropoda</taxon>
        <taxon>Caenogastropoda</taxon>
        <taxon>Neogastropoda</taxon>
        <taxon>Conoidea</taxon>
        <taxon>Conidae</taxon>
        <taxon>Conus</taxon>
        <taxon>Cylinder</taxon>
    </lineage>
</organism>
<keyword id="KW-0027">Amidation</keyword>
<keyword id="KW-0165">Cleavage on pair of basic residues</keyword>
<keyword id="KW-0903">Direct protein sequencing</keyword>
<keyword id="KW-1015">Disulfide bond</keyword>
<keyword id="KW-0379">Hydroxylation</keyword>
<keyword id="KW-0528">Neurotoxin</keyword>
<keyword id="KW-0964">Secreted</keyword>
<keyword id="KW-0732">Signal</keyword>
<keyword id="KW-0800">Toxin</keyword>
<reference key="1">
    <citation type="journal article" date="2005" name="Biochemistry">
        <title>Definition of the M-conotoxin superfamily: characterization of novel peptides from molluscivorous Conus venoms.</title>
        <authorList>
            <person name="Corpuz G.P."/>
            <person name="Jacobsen R.B."/>
            <person name="Jimenez E.C."/>
            <person name="Watkins M."/>
            <person name="Walker C."/>
            <person name="Colledge C."/>
            <person name="Garrett J.E."/>
            <person name="McDougal O."/>
            <person name="Li W."/>
            <person name="Gray W.R."/>
            <person name="Hillyard D.R."/>
            <person name="Rivier J."/>
            <person name="McIntosh J.M."/>
            <person name="Cruz L.J."/>
            <person name="Olivera B.M."/>
        </authorList>
    </citation>
    <scope>NUCLEOTIDE SEQUENCE [MRNA]</scope>
    <scope>PROTEIN SEQUENCE OF 53-64</scope>
    <scope>SUBCELLULAR LOCATION</scope>
    <scope>DISULFIDE BONDS</scope>
    <scope>MASS SPECTROMETRY</scope>
    <scope>HYDROXYLATION AT PRO-62</scope>
    <scope>AMIDATION AT CYS-64</scope>
    <source>
        <tissue>Venom</tissue>
        <tissue>Venom duct</tissue>
    </source>
</reference>
<reference key="2">
    <citation type="journal article" date="2009" name="Proc. Natl. Acad. Sci. U.S.A.">
        <title>Rapid sensitive analysis of cysteine rich peptide venom components.</title>
        <authorList>
            <person name="Ueberheide B.M."/>
            <person name="Fenyo D."/>
            <person name="Alewood P.F."/>
            <person name="Chait B.T."/>
        </authorList>
    </citation>
    <scope>PROTEIN SEQUENCE OF 53-64</scope>
    <scope>SUBCELLULAR LOCATION</scope>
    <scope>MASS SPECTROMETRY</scope>
    <scope>DISULFIDE BONDS</scope>
    <scope>HYDROXYLATION AT PRO-62</scope>
    <scope>AMIDATION AT CYS-64</scope>
    <source>
        <tissue>Venom</tissue>
    </source>
</reference>
<reference key="3">
    <citation type="thesis" date="1986" institute="University of Manila" country="Philippines">
        <authorList>
            <person name="Ramilo C.A."/>
        </authorList>
    </citation>
    <scope>PROTEIN SEQUENCE OF 53-64</scope>
    <scope>FUNCTION</scope>
    <scope>BIOASSAY</scope>
</reference>
<reference key="4">
    <citation type="journal article" date="2012" name="J. Proteome Res.">
        <title>Constrained de novo sequencing of conotoxins.</title>
        <authorList>
            <person name="Bhatia S."/>
            <person name="Kil Y.J."/>
            <person name="Ueberheide B."/>
            <person name="Chait B.T."/>
            <person name="Tayo L."/>
            <person name="Cruz L."/>
            <person name="Lu B."/>
            <person name="Yates J.R. III"/>
            <person name="Bern M."/>
        </authorList>
    </citation>
    <scope>IDENTIFICATION BY MASS SPECTROMETRY</scope>
    <scope>SUBCELLULAR LOCATION</scope>
    <scope>HYDROXYLATION AT PRO-62</scope>
    <scope>AMIDATION AT CYS-64</scope>
    <source>
        <tissue>Venom</tissue>
    </source>
</reference>
<dbReference type="ConoServer" id="1396">
    <property type="toxin name" value="TxIIIC precursor"/>
</dbReference>
<dbReference type="GO" id="GO:0005576">
    <property type="term" value="C:extracellular region"/>
    <property type="evidence" value="ECO:0007669"/>
    <property type="project" value="UniProtKB-SubCell"/>
</dbReference>
<dbReference type="GO" id="GO:0008200">
    <property type="term" value="F:ion channel inhibitor activity"/>
    <property type="evidence" value="ECO:0007669"/>
    <property type="project" value="InterPro"/>
</dbReference>
<dbReference type="GO" id="GO:0090729">
    <property type="term" value="F:toxin activity"/>
    <property type="evidence" value="ECO:0007669"/>
    <property type="project" value="UniProtKB-KW"/>
</dbReference>
<dbReference type="InterPro" id="IPR004214">
    <property type="entry name" value="Conotoxin"/>
</dbReference>
<dbReference type="Pfam" id="PF02950">
    <property type="entry name" value="Conotoxin"/>
    <property type="match status" value="1"/>
</dbReference>
<proteinExistence type="evidence at protein level"/>
<comment type="function">
    <text evidence="5">Causes scratching in mice.</text>
</comment>
<comment type="subcellular location">
    <subcellularLocation>
        <location evidence="2 3">Secreted</location>
    </subcellularLocation>
</comment>
<comment type="tissue specificity">
    <text evidence="9 10">Expressed by the venom duct.</text>
</comment>
<comment type="domain">
    <text evidence="8">The cysteine framework is III (CC-C-C-CC). Classified in the M-2 branch, since 2 residues stand between the fourth and the fifth cysteine residues.</text>
</comment>
<comment type="PTM">
    <text evidence="2 3 4">The hydroxylation at Pro-62 is observed in PubMed:15924437, PubMed:19380747 and PubMed:22709442, and the non-hydroxylation is described in PubMed:22709442.</text>
</comment>
<comment type="mass spectrometry"/>
<comment type="mass spectrometry"/>
<comment type="similarity">
    <text evidence="8">Belongs to the conotoxin M superfamily.</text>
</comment>